<evidence type="ECO:0000305" key="1"/>
<reference key="1">
    <citation type="journal article" date="2002" name="Proc. Natl. Acad. Sci. U.S.A.">
        <title>Genome sequence and comparative microarray analysis of serotype M18 group A Streptococcus strains associated with acute rheumatic fever outbreaks.</title>
        <authorList>
            <person name="Smoot J.C."/>
            <person name="Barbian K.D."/>
            <person name="Van Gompel J.J."/>
            <person name="Smoot L.M."/>
            <person name="Chaussee M.S."/>
            <person name="Sylva G.L."/>
            <person name="Sturdevant D.E."/>
            <person name="Ricklefs S.M."/>
            <person name="Porcella S.F."/>
            <person name="Parkins L.D."/>
            <person name="Beres S.B."/>
            <person name="Campbell D.S."/>
            <person name="Smith T.M."/>
            <person name="Zhang Q."/>
            <person name="Kapur V."/>
            <person name="Daly J.A."/>
            <person name="Veasy L.G."/>
            <person name="Musser J.M."/>
        </authorList>
    </citation>
    <scope>NUCLEOTIDE SEQUENCE [LARGE SCALE GENOMIC DNA]</scope>
    <source>
        <strain>MGAS8232</strain>
    </source>
</reference>
<organism>
    <name type="scientific">Streptococcus pyogenes serotype M18 (strain MGAS8232)</name>
    <dbReference type="NCBI Taxonomy" id="186103"/>
    <lineage>
        <taxon>Bacteria</taxon>
        <taxon>Bacillati</taxon>
        <taxon>Bacillota</taxon>
        <taxon>Bacilli</taxon>
        <taxon>Lactobacillales</taxon>
        <taxon>Streptococcaceae</taxon>
        <taxon>Streptococcus</taxon>
    </lineage>
</organism>
<dbReference type="EMBL" id="AE009949">
    <property type="protein sequence ID" value="AAL97825.1"/>
    <property type="molecule type" value="Genomic_DNA"/>
</dbReference>
<dbReference type="RefSeq" id="WP_011017826.1">
    <property type="nucleotide sequence ID" value="NC_003485.1"/>
</dbReference>
<dbReference type="SMR" id="Q8P0T7"/>
<dbReference type="KEGG" id="spm:spyM18_1212"/>
<dbReference type="HOGENOM" id="CLU_135567_0_0_9"/>
<dbReference type="Gene3D" id="1.10.1470.10">
    <property type="entry name" value="YjbJ"/>
    <property type="match status" value="1"/>
</dbReference>
<dbReference type="InterPro" id="IPR008462">
    <property type="entry name" value="CsbD"/>
</dbReference>
<dbReference type="InterPro" id="IPR036629">
    <property type="entry name" value="YjbJ_sf"/>
</dbReference>
<dbReference type="Pfam" id="PF05532">
    <property type="entry name" value="CsbD"/>
    <property type="match status" value="1"/>
</dbReference>
<dbReference type="SUPFAM" id="SSF69047">
    <property type="entry name" value="Hypothetical protein YjbJ"/>
    <property type="match status" value="1"/>
</dbReference>
<proteinExistence type="inferred from homology"/>
<sequence>MSDEKYNAKLDQAGGKLKEGFGKISGDKSLETEGKVDKVTGKVKEVIVDAKDTVKGLAKGLDNKDK</sequence>
<protein>
    <recommendedName>
        <fullName>UPF0337 protein spyM18_1212</fullName>
    </recommendedName>
</protein>
<accession>Q8P0T7</accession>
<feature type="chain" id="PRO_0000210057" description="UPF0337 protein spyM18_1212">
    <location>
        <begin position="1"/>
        <end position="66"/>
    </location>
</feature>
<comment type="similarity">
    <text evidence="1">Belongs to the UPF0337 (CsbD) family.</text>
</comment>
<name>Y1212_STRP8</name>
<gene>
    <name type="ordered locus">spyM18_1212</name>
</gene>